<organism>
    <name type="scientific">Rutilus rutilus</name>
    <name type="common">Roach</name>
    <dbReference type="NCBI Taxonomy" id="48668"/>
    <lineage>
        <taxon>Eukaryota</taxon>
        <taxon>Metazoa</taxon>
        <taxon>Chordata</taxon>
        <taxon>Craniata</taxon>
        <taxon>Vertebrata</taxon>
        <taxon>Euteleostomi</taxon>
        <taxon>Actinopterygii</taxon>
        <taxon>Neopterygii</taxon>
        <taxon>Teleostei</taxon>
        <taxon>Ostariophysi</taxon>
        <taxon>Cypriniformes</taxon>
        <taxon>Leuciscidae</taxon>
        <taxon>Leuciscinae</taxon>
        <taxon>Rutilus</taxon>
    </lineage>
</organism>
<keyword id="KW-0027">Amidation</keyword>
<keyword id="KW-0165">Cleavage on pair of basic residues</keyword>
<keyword id="KW-0372">Hormone</keyword>
<keyword id="KW-0873">Pyrrolidone carboxylic acid</keyword>
<keyword id="KW-0964">Secreted</keyword>
<keyword id="KW-0732">Signal</keyword>
<reference key="1">
    <citation type="journal article" date="1997" name="J. Mol. Endocrinol.">
        <title>Isolation and characterisation of mRNA encoding the salmon- and chicken- II type gonadotrophin-releasing hormones in the teleost fish Rutilus rutilus (Cyprinidae).</title>
        <authorList>
            <person name="Penlington M.C."/>
            <person name="Williams M.A."/>
            <person name="Sumpter J.P."/>
            <person name="Rand-Weaver M."/>
            <person name="Hoole D."/>
            <person name="Arme C."/>
        </authorList>
    </citation>
    <scope>NUCLEOTIDE SEQUENCE [MRNA]</scope>
    <source>
        <tissue>Brain</tissue>
    </source>
</reference>
<evidence type="ECO:0000250" key="1"/>
<evidence type="ECO:0000305" key="2"/>
<proteinExistence type="inferred from homology"/>
<protein>
    <recommendedName>
        <fullName>Progonadoliberin-2</fullName>
    </recommendedName>
    <alternativeName>
        <fullName>Progonadoliberin II</fullName>
    </alternativeName>
    <component>
        <recommendedName>
            <fullName>Gonadoliberin-2</fullName>
        </recommendedName>
        <alternativeName>
            <fullName>Gonadoliberin II</fullName>
        </alternativeName>
        <alternativeName>
            <fullName>Gonadotropin-releasing hormone II</fullName>
            <shortName>GnRH II</shortName>
        </alternativeName>
        <alternativeName>
            <fullName>Luliberin II</fullName>
        </alternativeName>
        <alternativeName>
            <fullName>Luteinizing hormone-releasing hormone II</fullName>
            <shortName>LH-RH II</shortName>
        </alternativeName>
    </component>
    <component>
        <recommendedName>
            <fullName>GnRH-associated peptide 2</fullName>
        </recommendedName>
        <alternativeName>
            <fullName>GnRH-associated peptide II</fullName>
        </alternativeName>
    </component>
</protein>
<name>GON2_RUTRU</name>
<accession>Q91330</accession>
<comment type="function">
    <text>Stimulates the secretion of gonadotropins.</text>
</comment>
<comment type="subcellular location">
    <subcellularLocation>
        <location>Secreted</location>
    </subcellularLocation>
</comment>
<comment type="similarity">
    <text evidence="2">Belongs to the GnRH family.</text>
</comment>
<dbReference type="EMBL" id="U60668">
    <property type="protein sequence ID" value="AAB65770.1"/>
    <property type="molecule type" value="mRNA"/>
</dbReference>
<dbReference type="GO" id="GO:0005615">
    <property type="term" value="C:extracellular space"/>
    <property type="evidence" value="ECO:0000250"/>
    <property type="project" value="UniProtKB"/>
</dbReference>
<dbReference type="GO" id="GO:0005183">
    <property type="term" value="F:gonadotropin hormone-releasing hormone activity"/>
    <property type="evidence" value="ECO:0007669"/>
    <property type="project" value="TreeGrafter"/>
</dbReference>
<dbReference type="GO" id="GO:0031530">
    <property type="term" value="F:gonadotropin-releasing hormone receptor binding"/>
    <property type="evidence" value="ECO:0007669"/>
    <property type="project" value="TreeGrafter"/>
</dbReference>
<dbReference type="InterPro" id="IPR002012">
    <property type="entry name" value="GnRH"/>
</dbReference>
<dbReference type="InterPro" id="IPR019792">
    <property type="entry name" value="Gonadoliberin"/>
</dbReference>
<dbReference type="PANTHER" id="PTHR10522">
    <property type="entry name" value="GONADOLIBERIN"/>
    <property type="match status" value="1"/>
</dbReference>
<dbReference type="PANTHER" id="PTHR10522:SF8">
    <property type="entry name" value="PROGONADOLIBERIN"/>
    <property type="match status" value="1"/>
</dbReference>
<dbReference type="Pfam" id="PF00446">
    <property type="entry name" value="GnRH"/>
    <property type="match status" value="1"/>
</dbReference>
<dbReference type="PROSITE" id="PS00473">
    <property type="entry name" value="GNRH"/>
    <property type="match status" value="1"/>
</dbReference>
<sequence>MVHICRLLVLMGMLLCLSAQFASSQHWSHGWYPGGKREIDIYDTSEVSGEIKLCEAGKCSYLRPQGRNILKTILLDALIRDFQKRK</sequence>
<feature type="signal peptide" evidence="1">
    <location>
        <begin position="1"/>
        <end position="24"/>
    </location>
</feature>
<feature type="chain" id="PRO_0000012493" description="Progonadoliberin-2">
    <location>
        <begin position="25"/>
        <end position="86"/>
    </location>
</feature>
<feature type="peptide" id="PRO_0000012494" description="Gonadoliberin-2">
    <location>
        <begin position="25"/>
        <end position="34"/>
    </location>
</feature>
<feature type="peptide" id="PRO_0000012495" description="GnRH-associated peptide 2">
    <location>
        <begin position="38"/>
        <end position="86"/>
    </location>
</feature>
<feature type="modified residue" description="Pyrrolidone carboxylic acid" evidence="1">
    <location>
        <position position="25"/>
    </location>
</feature>
<feature type="modified residue" description="Glycine amide" evidence="1">
    <location>
        <position position="34"/>
    </location>
</feature>
<gene>
    <name type="primary">gnrh2</name>
</gene>